<gene>
    <name type="primary">cnpy3</name>
    <name type="synonym">tnrc5</name>
</gene>
<comment type="function">
    <text evidence="1">Toll-like receptor (TLR)-specific co-chaperone for HSP90B1. Required for proper TLR folding and hence controls TLR exit from the endoplasmic reticulum. Consequently, required for immune responses (By similarity).</text>
</comment>
<comment type="subcellular location">
    <subcellularLocation>
        <location evidence="1">Endoplasmic reticulum</location>
    </subcellularLocation>
</comment>
<comment type="developmental stage">
    <text evidence="4">Expressed ubiquitously at 18 hours post-fertilization (hpf).</text>
</comment>
<comment type="similarity">
    <text evidence="5">Belongs to the canopy family.</text>
</comment>
<accession>A3KNS2</accession>
<accession>Q2L6K9</accession>
<accession>Q5XJK4</accession>
<name>CNPY3_DANRE</name>
<dbReference type="EMBL" id="AB201385">
    <property type="protein sequence ID" value="BAE78826.1"/>
    <property type="molecule type" value="mRNA"/>
</dbReference>
<dbReference type="EMBL" id="BC083297">
    <property type="protein sequence ID" value="AAH83297.1"/>
    <property type="molecule type" value="mRNA"/>
</dbReference>
<dbReference type="EMBL" id="BC133981">
    <property type="protein sequence ID" value="AAI33982.1"/>
    <property type="molecule type" value="mRNA"/>
</dbReference>
<dbReference type="RefSeq" id="NP_001034894.2">
    <property type="nucleotide sequence ID" value="NM_001039805.2"/>
</dbReference>
<dbReference type="FunCoup" id="A3KNS2">
    <property type="interactions" value="579"/>
</dbReference>
<dbReference type="STRING" id="7955.ENSDARP00000040115"/>
<dbReference type="PaxDb" id="7955-ENSDARP00000040115"/>
<dbReference type="PeptideAtlas" id="A3KNS2"/>
<dbReference type="GeneID" id="550136"/>
<dbReference type="KEGG" id="dre:550136"/>
<dbReference type="AGR" id="ZFIN:ZDB-GENE-050411-12"/>
<dbReference type="CTD" id="10695"/>
<dbReference type="ZFIN" id="ZDB-GENE-050411-12">
    <property type="gene designation" value="cnpy3"/>
</dbReference>
<dbReference type="eggNOG" id="KOG4052">
    <property type="taxonomic scope" value="Eukaryota"/>
</dbReference>
<dbReference type="InParanoid" id="A3KNS2"/>
<dbReference type="OrthoDB" id="6020060at2759"/>
<dbReference type="PhylomeDB" id="A3KNS2"/>
<dbReference type="PRO" id="PR:A3KNS2"/>
<dbReference type="Proteomes" id="UP000000437">
    <property type="component" value="Alternate scaffold 1"/>
</dbReference>
<dbReference type="Proteomes" id="UP000000437">
    <property type="component" value="Chromosome 1"/>
</dbReference>
<dbReference type="GO" id="GO:0005783">
    <property type="term" value="C:endoplasmic reticulum"/>
    <property type="evidence" value="ECO:0007669"/>
    <property type="project" value="UniProtKB-SubCell"/>
</dbReference>
<dbReference type="GO" id="GO:0005102">
    <property type="term" value="F:signaling receptor binding"/>
    <property type="evidence" value="ECO:0000318"/>
    <property type="project" value="GO_Central"/>
</dbReference>
<dbReference type="GO" id="GO:0045087">
    <property type="term" value="P:innate immune response"/>
    <property type="evidence" value="ECO:0007669"/>
    <property type="project" value="UniProtKB-KW"/>
</dbReference>
<dbReference type="InterPro" id="IPR021852">
    <property type="entry name" value="DUF3456"/>
</dbReference>
<dbReference type="PANTHER" id="PTHR15382">
    <property type="entry name" value="CTG4A-RELATED"/>
    <property type="match status" value="1"/>
</dbReference>
<dbReference type="PANTHER" id="PTHR15382:SF2">
    <property type="entry name" value="PROTEIN CANOPY HOMOLOG 3"/>
    <property type="match status" value="1"/>
</dbReference>
<dbReference type="Pfam" id="PF11938">
    <property type="entry name" value="DUF3456"/>
    <property type="match status" value="1"/>
</dbReference>
<keyword id="KW-0143">Chaperone</keyword>
<keyword id="KW-0175">Coiled coil</keyword>
<keyword id="KW-1015">Disulfide bond</keyword>
<keyword id="KW-0256">Endoplasmic reticulum</keyword>
<keyword id="KW-0391">Immunity</keyword>
<keyword id="KW-0399">Innate immunity</keyword>
<keyword id="KW-1185">Reference proteome</keyword>
<keyword id="KW-0732">Signal</keyword>
<proteinExistence type="evidence at transcript level"/>
<feature type="signal peptide" evidence="2">
    <location>
        <begin position="1"/>
        <end position="16"/>
    </location>
</feature>
<feature type="chain" id="PRO_0000313783" description="Protein canopy homolog 3">
    <location>
        <begin position="17"/>
        <end position="276"/>
    </location>
</feature>
<feature type="domain" description="Saposin B-type">
    <location>
        <begin position="30"/>
        <end position="269"/>
    </location>
</feature>
<feature type="region of interest" description="Disordered" evidence="3">
    <location>
        <begin position="206"/>
        <end position="276"/>
    </location>
</feature>
<feature type="coiled-coil region" evidence="2">
    <location>
        <begin position="137"/>
        <end position="162"/>
    </location>
</feature>
<feature type="compositionally biased region" description="Basic residues" evidence="3">
    <location>
        <begin position="210"/>
        <end position="219"/>
    </location>
</feature>
<feature type="compositionally biased region" description="Basic residues" evidence="3">
    <location>
        <begin position="228"/>
        <end position="239"/>
    </location>
</feature>
<feature type="compositionally biased region" description="Basic and acidic residues" evidence="3">
    <location>
        <begin position="240"/>
        <end position="252"/>
    </location>
</feature>
<feature type="disulfide bond" evidence="1">
    <location>
        <begin position="32"/>
        <end position="190"/>
    </location>
</feature>
<feature type="disulfide bond" evidence="1">
    <location>
        <begin position="35"/>
        <end position="178"/>
    </location>
</feature>
<feature type="disulfide bond" evidence="1">
    <location>
        <begin position="88"/>
        <end position="150"/>
    </location>
</feature>
<feature type="sequence conflict" description="In Ref. 2; AAH83297." evidence="5" ref="2">
    <original>D</original>
    <variation>E</variation>
    <location>
        <position position="208"/>
    </location>
</feature>
<feature type="sequence conflict" description="In Ref. 1; BAE78826." evidence="5" ref="1">
    <original>K</original>
    <variation>N</variation>
    <location>
        <position position="216"/>
    </location>
</feature>
<feature type="sequence conflict" description="In Ref. 1; BAE78826." evidence="5" ref="1">
    <original>M</original>
    <variation>T</variation>
    <location>
        <position position="251"/>
    </location>
</feature>
<organism>
    <name type="scientific">Danio rerio</name>
    <name type="common">Zebrafish</name>
    <name type="synonym">Brachydanio rerio</name>
    <dbReference type="NCBI Taxonomy" id="7955"/>
    <lineage>
        <taxon>Eukaryota</taxon>
        <taxon>Metazoa</taxon>
        <taxon>Chordata</taxon>
        <taxon>Craniata</taxon>
        <taxon>Vertebrata</taxon>
        <taxon>Euteleostomi</taxon>
        <taxon>Actinopterygii</taxon>
        <taxon>Neopterygii</taxon>
        <taxon>Teleostei</taxon>
        <taxon>Ostariophysi</taxon>
        <taxon>Cypriniformes</taxon>
        <taxon>Danionidae</taxon>
        <taxon>Danioninae</taxon>
        <taxon>Danio</taxon>
    </lineage>
</organism>
<reference key="1">
    <citation type="journal article" date="2006" name="Curr. Biol.">
        <title>Canopy1, a novel regulator of FGF signaling around the midbrain-hindbrain boundary in zebrafish.</title>
        <authorList>
            <person name="Hirate Y."/>
            <person name="Okamoto H."/>
        </authorList>
    </citation>
    <scope>NUCLEOTIDE SEQUENCE [MRNA]</scope>
    <scope>DEVELOPMENTAL STAGE</scope>
</reference>
<reference key="2">
    <citation type="submission" date="2007-03" db="EMBL/GenBank/DDBJ databases">
        <authorList>
            <consortium name="NIH - Zebrafish Gene Collection (ZGC) project"/>
        </authorList>
    </citation>
    <scope>NUCLEOTIDE SEQUENCE [LARGE SCALE MRNA]</scope>
    <source>
        <tissue>Embryo</tissue>
        <tissue>Larva</tissue>
    </source>
</reference>
<evidence type="ECO:0000250" key="1"/>
<evidence type="ECO:0000255" key="2"/>
<evidence type="ECO:0000256" key="3">
    <source>
        <dbReference type="SAM" id="MobiDB-lite"/>
    </source>
</evidence>
<evidence type="ECO:0000269" key="4">
    <source>
    </source>
</evidence>
<evidence type="ECO:0000305" key="5"/>
<protein>
    <recommendedName>
        <fullName>Protein canopy homolog 3</fullName>
    </recommendedName>
    <alternativeName>
        <fullName>Trinucleotide repeat-containing gene 5 protein</fullName>
    </alternativeName>
</protein>
<sequence length="276" mass="31458">MNVFISVVLFLGSARAASKTGDDEWVHLPNKCEVCKFVSIEMKSAFDETGKTKEVIDTNYRFLDDKGAPPIKYVKSDIRFIEVTENVCSRIMQYNLHKERDGSNRFAKGMSETFSTLHNLVNKGVKVVMDIPYELWNETSAEVADLKKQCDVMVEQYEDVIEDWYKGSQEEDLTTYLCEKHVLKGQDTGCLKETWAGKKGDMAAIAEDKKKKKGKKKKGKDGEDGQKKEKKVKKKKKKSKISDSESSKRRMEAAGFTSDEEEIQKKVPLNQPKTEL</sequence>